<gene>
    <name evidence="1" type="primary">gloB</name>
    <name type="ordered locus">PLES_35141</name>
</gene>
<dbReference type="EC" id="3.1.2.6" evidence="1"/>
<dbReference type="EMBL" id="FM209186">
    <property type="protein sequence ID" value="CAW28241.1"/>
    <property type="molecule type" value="Genomic_DNA"/>
</dbReference>
<dbReference type="RefSeq" id="WP_012614279.1">
    <property type="nucleotide sequence ID" value="NC_011770.1"/>
</dbReference>
<dbReference type="SMR" id="B7VB64"/>
<dbReference type="KEGG" id="pag:PLES_35141"/>
<dbReference type="HOGENOM" id="CLU_030571_4_1_6"/>
<dbReference type="UniPathway" id="UPA00619">
    <property type="reaction ID" value="UER00676"/>
</dbReference>
<dbReference type="GO" id="GO:0004416">
    <property type="term" value="F:hydroxyacylglutathione hydrolase activity"/>
    <property type="evidence" value="ECO:0007669"/>
    <property type="project" value="UniProtKB-UniRule"/>
</dbReference>
<dbReference type="GO" id="GO:0046872">
    <property type="term" value="F:metal ion binding"/>
    <property type="evidence" value="ECO:0007669"/>
    <property type="project" value="UniProtKB-KW"/>
</dbReference>
<dbReference type="GO" id="GO:0019243">
    <property type="term" value="P:methylglyoxal catabolic process to D-lactate via S-lactoyl-glutathione"/>
    <property type="evidence" value="ECO:0007669"/>
    <property type="project" value="InterPro"/>
</dbReference>
<dbReference type="CDD" id="cd07723">
    <property type="entry name" value="hydroxyacylglutathione_hydrolase_MBL-fold"/>
    <property type="match status" value="1"/>
</dbReference>
<dbReference type="Gene3D" id="3.60.15.10">
    <property type="entry name" value="Ribonuclease Z/Hydroxyacylglutathione hydrolase-like"/>
    <property type="match status" value="1"/>
</dbReference>
<dbReference type="HAMAP" id="MF_01374">
    <property type="entry name" value="Glyoxalase_2"/>
    <property type="match status" value="1"/>
</dbReference>
<dbReference type="InterPro" id="IPR035680">
    <property type="entry name" value="Clx_II_MBL"/>
</dbReference>
<dbReference type="InterPro" id="IPR050110">
    <property type="entry name" value="Glyoxalase_II_hydrolase"/>
</dbReference>
<dbReference type="InterPro" id="IPR032282">
    <property type="entry name" value="HAGH_C"/>
</dbReference>
<dbReference type="InterPro" id="IPR017782">
    <property type="entry name" value="Hydroxyacylglutathione_Hdrlase"/>
</dbReference>
<dbReference type="InterPro" id="IPR001279">
    <property type="entry name" value="Metallo-B-lactamas"/>
</dbReference>
<dbReference type="InterPro" id="IPR036866">
    <property type="entry name" value="RibonucZ/Hydroxyglut_hydro"/>
</dbReference>
<dbReference type="NCBIfam" id="TIGR03413">
    <property type="entry name" value="GSH_gloB"/>
    <property type="match status" value="1"/>
</dbReference>
<dbReference type="PANTHER" id="PTHR43705">
    <property type="entry name" value="HYDROXYACYLGLUTATHIONE HYDROLASE"/>
    <property type="match status" value="1"/>
</dbReference>
<dbReference type="PANTHER" id="PTHR43705:SF1">
    <property type="entry name" value="HYDROXYACYLGLUTATHIONE HYDROLASE GLOB"/>
    <property type="match status" value="1"/>
</dbReference>
<dbReference type="Pfam" id="PF16123">
    <property type="entry name" value="HAGH_C"/>
    <property type="match status" value="1"/>
</dbReference>
<dbReference type="Pfam" id="PF00753">
    <property type="entry name" value="Lactamase_B"/>
    <property type="match status" value="1"/>
</dbReference>
<dbReference type="PIRSF" id="PIRSF005457">
    <property type="entry name" value="Glx"/>
    <property type="match status" value="1"/>
</dbReference>
<dbReference type="SMART" id="SM00849">
    <property type="entry name" value="Lactamase_B"/>
    <property type="match status" value="1"/>
</dbReference>
<dbReference type="SUPFAM" id="SSF56281">
    <property type="entry name" value="Metallo-hydrolase/oxidoreductase"/>
    <property type="match status" value="1"/>
</dbReference>
<organism>
    <name type="scientific">Pseudomonas aeruginosa (strain LESB58)</name>
    <dbReference type="NCBI Taxonomy" id="557722"/>
    <lineage>
        <taxon>Bacteria</taxon>
        <taxon>Pseudomonadati</taxon>
        <taxon>Pseudomonadota</taxon>
        <taxon>Gammaproteobacteria</taxon>
        <taxon>Pseudomonadales</taxon>
        <taxon>Pseudomonadaceae</taxon>
        <taxon>Pseudomonas</taxon>
    </lineage>
</organism>
<sequence length="258" mass="28880">MIQIDALPAFNDNYIWLLQDATSRRCAVVDPGDAKPVEAWLAAHPDWRLSDILVTHHHHDHVGGVAALKELTGARVLGPANEKIPARDLALEDGERVEVLGLVFEIFHVPGHTLGHIAYYHPAETPLLFCGDTLFAAGCGRLFEGTPAQMHHSLARLAALPANTRVYCTHEYTLSNLRFALAVEPDNAALRERFEEATRLRERDRITLPSEISLELSTNPFLRVSEKSVKKKADQRSGQQNRTPEEVFAVLRAWKDQF</sequence>
<proteinExistence type="inferred from homology"/>
<evidence type="ECO:0000255" key="1">
    <source>
        <dbReference type="HAMAP-Rule" id="MF_01374"/>
    </source>
</evidence>
<reference key="1">
    <citation type="journal article" date="2009" name="Genome Res.">
        <title>Newly introduced genomic prophage islands are critical determinants of in vivo competitiveness in the Liverpool epidemic strain of Pseudomonas aeruginosa.</title>
        <authorList>
            <person name="Winstanley C."/>
            <person name="Langille M.G.I."/>
            <person name="Fothergill J.L."/>
            <person name="Kukavica-Ibrulj I."/>
            <person name="Paradis-Bleau C."/>
            <person name="Sanschagrin F."/>
            <person name="Thomson N.R."/>
            <person name="Winsor G.L."/>
            <person name="Quail M.A."/>
            <person name="Lennard N."/>
            <person name="Bignell A."/>
            <person name="Clarke L."/>
            <person name="Seeger K."/>
            <person name="Saunders D."/>
            <person name="Harris D."/>
            <person name="Parkhill J."/>
            <person name="Hancock R.E.W."/>
            <person name="Brinkman F.S.L."/>
            <person name="Levesque R.C."/>
        </authorList>
    </citation>
    <scope>NUCLEOTIDE SEQUENCE [LARGE SCALE GENOMIC DNA]</scope>
    <source>
        <strain>LESB58</strain>
    </source>
</reference>
<keyword id="KW-0378">Hydrolase</keyword>
<keyword id="KW-0479">Metal-binding</keyword>
<keyword id="KW-0862">Zinc</keyword>
<comment type="function">
    <text evidence="1">Thiolesterase that catalyzes the hydrolysis of S-D-lactoyl-glutathione to form glutathione and D-lactic acid.</text>
</comment>
<comment type="catalytic activity">
    <reaction evidence="1">
        <text>an S-(2-hydroxyacyl)glutathione + H2O = a 2-hydroxy carboxylate + glutathione + H(+)</text>
        <dbReference type="Rhea" id="RHEA:21864"/>
        <dbReference type="ChEBI" id="CHEBI:15377"/>
        <dbReference type="ChEBI" id="CHEBI:15378"/>
        <dbReference type="ChEBI" id="CHEBI:57925"/>
        <dbReference type="ChEBI" id="CHEBI:58896"/>
        <dbReference type="ChEBI" id="CHEBI:71261"/>
        <dbReference type="EC" id="3.1.2.6"/>
    </reaction>
</comment>
<comment type="cofactor">
    <cofactor evidence="1">
        <name>Zn(2+)</name>
        <dbReference type="ChEBI" id="CHEBI:29105"/>
    </cofactor>
    <text evidence="1">Binds 2 Zn(2+) ions per subunit.</text>
</comment>
<comment type="pathway">
    <text evidence="1">Secondary metabolite metabolism; methylglyoxal degradation; (R)-lactate from methylglyoxal: step 2/2.</text>
</comment>
<comment type="subunit">
    <text evidence="1">Monomer.</text>
</comment>
<comment type="similarity">
    <text evidence="1">Belongs to the metallo-beta-lactamase superfamily. Glyoxalase II family.</text>
</comment>
<protein>
    <recommendedName>
        <fullName evidence="1">Hydroxyacylglutathione hydrolase</fullName>
        <ecNumber evidence="1">3.1.2.6</ecNumber>
    </recommendedName>
    <alternativeName>
        <fullName evidence="1">Glyoxalase II</fullName>
        <shortName evidence="1">Glx II</shortName>
    </alternativeName>
</protein>
<feature type="chain" id="PRO_1000144780" description="Hydroxyacylglutathione hydrolase">
    <location>
        <begin position="1"/>
        <end position="258"/>
    </location>
</feature>
<feature type="binding site" evidence="1">
    <location>
        <position position="56"/>
    </location>
    <ligand>
        <name>Zn(2+)</name>
        <dbReference type="ChEBI" id="CHEBI:29105"/>
        <label>1</label>
    </ligand>
</feature>
<feature type="binding site" evidence="1">
    <location>
        <position position="58"/>
    </location>
    <ligand>
        <name>Zn(2+)</name>
        <dbReference type="ChEBI" id="CHEBI:29105"/>
        <label>1</label>
    </ligand>
</feature>
<feature type="binding site" evidence="1">
    <location>
        <position position="60"/>
    </location>
    <ligand>
        <name>Zn(2+)</name>
        <dbReference type="ChEBI" id="CHEBI:29105"/>
        <label>2</label>
    </ligand>
</feature>
<feature type="binding site" evidence="1">
    <location>
        <position position="61"/>
    </location>
    <ligand>
        <name>Zn(2+)</name>
        <dbReference type="ChEBI" id="CHEBI:29105"/>
        <label>2</label>
    </ligand>
</feature>
<feature type="binding site" evidence="1">
    <location>
        <position position="112"/>
    </location>
    <ligand>
        <name>Zn(2+)</name>
        <dbReference type="ChEBI" id="CHEBI:29105"/>
        <label>1</label>
    </ligand>
</feature>
<feature type="binding site" evidence="1">
    <location>
        <position position="132"/>
    </location>
    <ligand>
        <name>Zn(2+)</name>
        <dbReference type="ChEBI" id="CHEBI:29105"/>
        <label>1</label>
    </ligand>
</feature>
<feature type="binding site" evidence="1">
    <location>
        <position position="132"/>
    </location>
    <ligand>
        <name>Zn(2+)</name>
        <dbReference type="ChEBI" id="CHEBI:29105"/>
        <label>2</label>
    </ligand>
</feature>
<feature type="binding site" evidence="1">
    <location>
        <position position="170"/>
    </location>
    <ligand>
        <name>Zn(2+)</name>
        <dbReference type="ChEBI" id="CHEBI:29105"/>
        <label>2</label>
    </ligand>
</feature>
<name>GLO2_PSEA8</name>
<accession>B7VB64</accession>